<proteinExistence type="inferred from homology"/>
<name>IDI_KOCRD</name>
<sequence>MSENSTPERVVLLDEQHQPTGTALKSEVHTEATPLHLAFSCHVLNPDGRVLVTRRALSKRTWPGVWSNSFCGHPGPHESFEDAIARRARQELGLEIRNLTVVVPEFQYRATDATGVVENEFCPVFVAVTDTDPQPAESEVAEYAWTAPRDLIAAVESAPYAFSPWLGDQVREPALREALG</sequence>
<reference key="1">
    <citation type="journal article" date="2008" name="J. Bacteriol.">
        <title>Complete genome sequence of the soil actinomycete Kocuria rhizophila.</title>
        <authorList>
            <person name="Takarada H."/>
            <person name="Sekine M."/>
            <person name="Kosugi H."/>
            <person name="Matsuo Y."/>
            <person name="Fujisawa T."/>
            <person name="Omata S."/>
            <person name="Kishi E."/>
            <person name="Shimizu A."/>
            <person name="Tsukatani N."/>
            <person name="Tanikawa S."/>
            <person name="Fujita N."/>
            <person name="Harayama S."/>
        </authorList>
    </citation>
    <scope>NUCLEOTIDE SEQUENCE [LARGE SCALE GENOMIC DNA]</scope>
    <source>
        <strain>ATCC 9341 / DSM 348 / NBRC 103217 / DC2201</strain>
    </source>
</reference>
<dbReference type="EC" id="5.3.3.2" evidence="1"/>
<dbReference type="EMBL" id="AP009152">
    <property type="protein sequence ID" value="BAG28651.1"/>
    <property type="molecule type" value="Genomic_DNA"/>
</dbReference>
<dbReference type="RefSeq" id="WP_012397378.1">
    <property type="nucleotide sequence ID" value="NC_010617.1"/>
</dbReference>
<dbReference type="SMR" id="B2GFH1"/>
<dbReference type="STRING" id="378753.KRH_03040"/>
<dbReference type="KEGG" id="krh:KRH_03040"/>
<dbReference type="eggNOG" id="COG1443">
    <property type="taxonomic scope" value="Bacteria"/>
</dbReference>
<dbReference type="HOGENOM" id="CLU_060552_2_0_11"/>
<dbReference type="OrthoDB" id="9809458at2"/>
<dbReference type="UniPathway" id="UPA00059">
    <property type="reaction ID" value="UER00104"/>
</dbReference>
<dbReference type="Proteomes" id="UP000008838">
    <property type="component" value="Chromosome"/>
</dbReference>
<dbReference type="GO" id="GO:0005737">
    <property type="term" value="C:cytoplasm"/>
    <property type="evidence" value="ECO:0007669"/>
    <property type="project" value="UniProtKB-SubCell"/>
</dbReference>
<dbReference type="GO" id="GO:0004452">
    <property type="term" value="F:isopentenyl-diphosphate delta-isomerase activity"/>
    <property type="evidence" value="ECO:0007669"/>
    <property type="project" value="UniProtKB-UniRule"/>
</dbReference>
<dbReference type="GO" id="GO:0046872">
    <property type="term" value="F:metal ion binding"/>
    <property type="evidence" value="ECO:0007669"/>
    <property type="project" value="UniProtKB-KW"/>
</dbReference>
<dbReference type="GO" id="GO:0050992">
    <property type="term" value="P:dimethylallyl diphosphate biosynthetic process"/>
    <property type="evidence" value="ECO:0007669"/>
    <property type="project" value="UniProtKB-UniRule"/>
</dbReference>
<dbReference type="GO" id="GO:0008299">
    <property type="term" value="P:isoprenoid biosynthetic process"/>
    <property type="evidence" value="ECO:0007669"/>
    <property type="project" value="UniProtKB-KW"/>
</dbReference>
<dbReference type="CDD" id="cd02885">
    <property type="entry name" value="NUDIX_IPP_Isomerase"/>
    <property type="match status" value="1"/>
</dbReference>
<dbReference type="FunFam" id="3.90.79.10:FF:000009">
    <property type="entry name" value="Isopentenyl-diphosphate Delta-isomerase"/>
    <property type="match status" value="1"/>
</dbReference>
<dbReference type="Gene3D" id="3.90.79.10">
    <property type="entry name" value="Nucleoside Triphosphate Pyrophosphohydrolase"/>
    <property type="match status" value="1"/>
</dbReference>
<dbReference type="HAMAP" id="MF_00202">
    <property type="entry name" value="Idi"/>
    <property type="match status" value="1"/>
</dbReference>
<dbReference type="InterPro" id="IPR056375">
    <property type="entry name" value="Idi_bact"/>
</dbReference>
<dbReference type="InterPro" id="IPR011876">
    <property type="entry name" value="IsopentenylPP_isomerase_typ1"/>
</dbReference>
<dbReference type="InterPro" id="IPR015797">
    <property type="entry name" value="NUDIX_hydrolase-like_dom_sf"/>
</dbReference>
<dbReference type="InterPro" id="IPR000086">
    <property type="entry name" value="NUDIX_hydrolase_dom"/>
</dbReference>
<dbReference type="NCBIfam" id="TIGR02150">
    <property type="entry name" value="IPP_isom_1"/>
    <property type="match status" value="1"/>
</dbReference>
<dbReference type="NCBIfam" id="NF002995">
    <property type="entry name" value="PRK03759.1"/>
    <property type="match status" value="1"/>
</dbReference>
<dbReference type="PANTHER" id="PTHR10885">
    <property type="entry name" value="ISOPENTENYL-DIPHOSPHATE DELTA-ISOMERASE"/>
    <property type="match status" value="1"/>
</dbReference>
<dbReference type="PANTHER" id="PTHR10885:SF0">
    <property type="entry name" value="ISOPENTENYL-DIPHOSPHATE DELTA-ISOMERASE"/>
    <property type="match status" value="1"/>
</dbReference>
<dbReference type="Pfam" id="PF00293">
    <property type="entry name" value="NUDIX"/>
    <property type="match status" value="1"/>
</dbReference>
<dbReference type="PIRSF" id="PIRSF018427">
    <property type="entry name" value="Isopntndiph_ism"/>
    <property type="match status" value="1"/>
</dbReference>
<dbReference type="SUPFAM" id="SSF55811">
    <property type="entry name" value="Nudix"/>
    <property type="match status" value="1"/>
</dbReference>
<dbReference type="PROSITE" id="PS51462">
    <property type="entry name" value="NUDIX"/>
    <property type="match status" value="1"/>
</dbReference>
<organism>
    <name type="scientific">Kocuria rhizophila (strain ATCC 9341 / DSM 348 / NBRC 103217 / DC2201)</name>
    <dbReference type="NCBI Taxonomy" id="378753"/>
    <lineage>
        <taxon>Bacteria</taxon>
        <taxon>Bacillati</taxon>
        <taxon>Actinomycetota</taxon>
        <taxon>Actinomycetes</taxon>
        <taxon>Micrococcales</taxon>
        <taxon>Micrococcaceae</taxon>
        <taxon>Kocuria</taxon>
    </lineage>
</organism>
<keyword id="KW-0963">Cytoplasm</keyword>
<keyword id="KW-0413">Isomerase</keyword>
<keyword id="KW-0414">Isoprene biosynthesis</keyword>
<keyword id="KW-0460">Magnesium</keyword>
<keyword id="KW-0464">Manganese</keyword>
<keyword id="KW-0479">Metal-binding</keyword>
<keyword id="KW-1185">Reference proteome</keyword>
<evidence type="ECO:0000255" key="1">
    <source>
        <dbReference type="HAMAP-Rule" id="MF_00202"/>
    </source>
</evidence>
<accession>B2GFH1</accession>
<comment type="function">
    <text evidence="1">Catalyzes the 1,3-allylic rearrangement of the homoallylic substrate isopentenyl (IPP) to its highly electrophilic allylic isomer, dimethylallyl diphosphate (DMAPP).</text>
</comment>
<comment type="catalytic activity">
    <reaction evidence="1">
        <text>isopentenyl diphosphate = dimethylallyl diphosphate</text>
        <dbReference type="Rhea" id="RHEA:23284"/>
        <dbReference type="ChEBI" id="CHEBI:57623"/>
        <dbReference type="ChEBI" id="CHEBI:128769"/>
        <dbReference type="EC" id="5.3.3.2"/>
    </reaction>
</comment>
<comment type="cofactor">
    <cofactor evidence="1">
        <name>Mg(2+)</name>
        <dbReference type="ChEBI" id="CHEBI:18420"/>
    </cofactor>
    <text evidence="1">Binds 1 Mg(2+) ion per subunit. The magnesium ion binds only when substrate is bound.</text>
</comment>
<comment type="cofactor">
    <cofactor evidence="1">
        <name>Mn(2+)</name>
        <dbReference type="ChEBI" id="CHEBI:29035"/>
    </cofactor>
    <text evidence="1">Binds 1 Mn(2+) ion per subunit.</text>
</comment>
<comment type="pathway">
    <text evidence="1">Isoprenoid biosynthesis; dimethylallyl diphosphate biosynthesis; dimethylallyl diphosphate from isopentenyl diphosphate: step 1/1.</text>
</comment>
<comment type="subcellular location">
    <subcellularLocation>
        <location evidence="1">Cytoplasm</location>
    </subcellularLocation>
</comment>
<comment type="similarity">
    <text evidence="1">Belongs to the IPP isomerase type 1 family.</text>
</comment>
<feature type="chain" id="PRO_1000204113" description="Isopentenyl-diphosphate Delta-isomerase">
    <location>
        <begin position="1"/>
        <end position="180"/>
    </location>
</feature>
<feature type="active site" evidence="1">
    <location>
        <position position="71"/>
    </location>
</feature>
<feature type="active site" evidence="1">
    <location>
        <position position="120"/>
    </location>
</feature>
<feature type="binding site" evidence="1">
    <location>
        <position position="29"/>
    </location>
    <ligand>
        <name>Mn(2+)</name>
        <dbReference type="ChEBI" id="CHEBI:29035"/>
    </ligand>
</feature>
<feature type="binding site" evidence="1">
    <location>
        <position position="36"/>
    </location>
    <ligand>
        <name>Mn(2+)</name>
        <dbReference type="ChEBI" id="CHEBI:29035"/>
    </ligand>
</feature>
<feature type="binding site" evidence="1">
    <location>
        <position position="73"/>
    </location>
    <ligand>
        <name>Mn(2+)</name>
        <dbReference type="ChEBI" id="CHEBI:29035"/>
    </ligand>
</feature>
<feature type="binding site" evidence="1">
    <location>
        <position position="91"/>
    </location>
    <ligand>
        <name>Mg(2+)</name>
        <dbReference type="ChEBI" id="CHEBI:18420"/>
    </ligand>
</feature>
<feature type="binding site" evidence="1">
    <location>
        <position position="118"/>
    </location>
    <ligand>
        <name>Mn(2+)</name>
        <dbReference type="ChEBI" id="CHEBI:29035"/>
    </ligand>
</feature>
<feature type="binding site" evidence="1">
    <location>
        <position position="120"/>
    </location>
    <ligand>
        <name>Mn(2+)</name>
        <dbReference type="ChEBI" id="CHEBI:29035"/>
    </ligand>
</feature>
<gene>
    <name evidence="1" type="primary">idi</name>
    <name type="ordered locus">KRH_03040</name>
</gene>
<protein>
    <recommendedName>
        <fullName evidence="1">Isopentenyl-diphosphate Delta-isomerase</fullName>
        <shortName evidence="1">IPP isomerase</shortName>
        <ecNumber evidence="1">5.3.3.2</ecNumber>
    </recommendedName>
    <alternativeName>
        <fullName evidence="1">IPP:DMAPP isomerase</fullName>
    </alternativeName>
    <alternativeName>
        <fullName evidence="1">Isopentenyl pyrophosphate isomerase</fullName>
    </alternativeName>
</protein>